<dbReference type="EC" id="3.2.1.8"/>
<dbReference type="EMBL" id="X91858">
    <property type="protein sequence ID" value="CAA62969.1"/>
    <property type="molecule type" value="mRNA"/>
</dbReference>
<dbReference type="SMR" id="Q12667"/>
<dbReference type="CAZy" id="GH11">
    <property type="family name" value="Glycoside Hydrolase Family 11"/>
</dbReference>
<dbReference type="UniPathway" id="UPA00114"/>
<dbReference type="GO" id="GO:0031176">
    <property type="term" value="F:endo-1,4-beta-xylanase activity"/>
    <property type="evidence" value="ECO:0007669"/>
    <property type="project" value="UniProtKB-EC"/>
</dbReference>
<dbReference type="GO" id="GO:0045493">
    <property type="term" value="P:xylan catabolic process"/>
    <property type="evidence" value="ECO:0007669"/>
    <property type="project" value="UniProtKB-UniPathway"/>
</dbReference>
<dbReference type="Gene3D" id="2.60.120.180">
    <property type="match status" value="2"/>
</dbReference>
<dbReference type="Gene3D" id="3.90.1220.10">
    <property type="entry name" value="Cellulose docking domain, dockering"/>
    <property type="match status" value="2"/>
</dbReference>
<dbReference type="InterPro" id="IPR002883">
    <property type="entry name" value="CBM10/Dockerin_dom"/>
</dbReference>
<dbReference type="InterPro" id="IPR013320">
    <property type="entry name" value="ConA-like_dom_sf"/>
</dbReference>
<dbReference type="InterPro" id="IPR009034">
    <property type="entry name" value="Dockerin_dom_fun_sf"/>
</dbReference>
<dbReference type="InterPro" id="IPR013319">
    <property type="entry name" value="GH11/12"/>
</dbReference>
<dbReference type="InterPro" id="IPR018208">
    <property type="entry name" value="GH11_AS_1"/>
</dbReference>
<dbReference type="InterPro" id="IPR033123">
    <property type="entry name" value="GH11_dom"/>
</dbReference>
<dbReference type="InterPro" id="IPR001137">
    <property type="entry name" value="Glyco_hydro_11"/>
</dbReference>
<dbReference type="PANTHER" id="PTHR46828">
    <property type="entry name" value="ENDO-1,4-BETA-XYLANASE A-RELATED"/>
    <property type="match status" value="1"/>
</dbReference>
<dbReference type="PANTHER" id="PTHR46828:SF2">
    <property type="entry name" value="ENDO-1,4-BETA-XYLANASE A-RELATED"/>
    <property type="match status" value="1"/>
</dbReference>
<dbReference type="Pfam" id="PF02013">
    <property type="entry name" value="CBM_10"/>
    <property type="match status" value="2"/>
</dbReference>
<dbReference type="Pfam" id="PF00457">
    <property type="entry name" value="Glyco_hydro_11"/>
    <property type="match status" value="2"/>
</dbReference>
<dbReference type="PRINTS" id="PR00911">
    <property type="entry name" value="GLHYDRLASE11"/>
</dbReference>
<dbReference type="SUPFAM" id="SSF64571">
    <property type="entry name" value="Cellulose docking domain, dockering"/>
    <property type="match status" value="2"/>
</dbReference>
<dbReference type="SUPFAM" id="SSF49899">
    <property type="entry name" value="Concanavalin A-like lectins/glucanases"/>
    <property type="match status" value="2"/>
</dbReference>
<dbReference type="PROSITE" id="PS51763">
    <property type="entry name" value="CBM10"/>
    <property type="match status" value="2"/>
</dbReference>
<dbReference type="PROSITE" id="PS00776">
    <property type="entry name" value="GH11_1"/>
    <property type="match status" value="1"/>
</dbReference>
<dbReference type="PROSITE" id="PS51761">
    <property type="entry name" value="GH11_3"/>
    <property type="match status" value="2"/>
</dbReference>
<comment type="function">
    <text>Hydrolyzes 1,4-beta linked polysaccharide backbones of xylans, one of the major hemicellulose components in hardwoods and softwoods. It is more active against xylopentaose than xylotetraose, has trace activity against xylotriose. The major products released from hydrolysis of xylooligosaccharides are xylobiose and xylotriose. The reiterated 40 AA domain is involved in binding the cellulase-hemicellulase complex.</text>
</comment>
<comment type="catalytic activity">
    <reaction>
        <text>Endohydrolysis of (1-&gt;4)-beta-D-xylosidic linkages in xylans.</text>
        <dbReference type="EC" id="3.2.1.8"/>
    </reaction>
</comment>
<comment type="pathway">
    <text>Glycan degradation; xylan degradation.</text>
</comment>
<comment type="domain">
    <text>Consists of an N- and C-terminal catalytic domains linked to a middle reiterated domain. Only the C-terminal catalytic domain is active.</text>
</comment>
<comment type="similarity">
    <text evidence="7">Belongs to the glycosyl hydrolase 11 (cellulase G) family.</text>
</comment>
<proteinExistence type="evidence at transcript level"/>
<sequence length="625" mass="68049">MKLFQIFPLLLSLTSVTLAADDFCNATGFQGQSVVSTGHDVKKIGNIDYEQWADGGNNSATFYSDGSFKCNFSNTKDYLCRSGVAFSQAKYPSEIGHIEAEYRLVKKSASNVGYSYVGVYGWTLQSGISGVYEYYIVDNWLSQWRPGDWVGNTKFGDFTIDGGVYTVYKNVNGNLTQYFSLRKSERTCGTIDVTAHFAQWEKLGLKMPKITEIKVLAEAGNTGGGCSGSVEIPYAKIYINGKDQDGKSKGGSSSGGSNGQGLGNGQGNGQGQGNGQGQSATGSGKCPSTITSQGYKCCSSNCDIIYRDQSGDWGVENDEWCGCGSRVPKTTNCPSSIKNQGYKCCSDSCEIVLTDSDGDWGIENDEWCGCGIKNTTPTTTTKKSNNSQPTQGQSNNNSSTNTNFCSTSKHSGQSVTETSNKVGSIGGVGYELWADSGNNSATFYSDGSFSCSFRNAKDYLCRSGLSFDSTKTYQQLGHMYADFKLVKQNIQNVDYSYVGIYGWTRNPLVEFYVVDNWLSQWRPGDWVGNKKHGDFTIDGAKYTVYENTRTGPSIDGNTTFKQYFSIRQQARDCGTIDITAHFEQWEKLGMRMGKMHEAKVLGEAGSTGSGTSGTADFPYAKVYIK</sequence>
<organism>
    <name type="scientific">Piromyces sp</name>
    <dbReference type="NCBI Taxonomy" id="45796"/>
    <lineage>
        <taxon>Eukaryota</taxon>
        <taxon>Fungi</taxon>
        <taxon>Fungi incertae sedis</taxon>
        <taxon>Chytridiomycota</taxon>
        <taxon>Chytridiomycota incertae sedis</taxon>
        <taxon>Neocallimastigomycetes</taxon>
        <taxon>Neocallimastigales</taxon>
        <taxon>Neocallimastigaceae</taxon>
        <taxon>Piromyces</taxon>
    </lineage>
</organism>
<evidence type="ECO:0000250" key="1"/>
<evidence type="ECO:0000255" key="2"/>
<evidence type="ECO:0000255" key="3">
    <source>
        <dbReference type="PROSITE-ProRule" id="PRU01097"/>
    </source>
</evidence>
<evidence type="ECO:0000255" key="4">
    <source>
        <dbReference type="PROSITE-ProRule" id="PRU01099"/>
    </source>
</evidence>
<evidence type="ECO:0000255" key="5">
    <source>
        <dbReference type="PROSITE-ProRule" id="PRU10062"/>
    </source>
</evidence>
<evidence type="ECO:0000256" key="6">
    <source>
        <dbReference type="SAM" id="MobiDB-lite"/>
    </source>
</evidence>
<evidence type="ECO:0000305" key="7"/>
<feature type="signal peptide" evidence="2">
    <location>
        <begin position="1"/>
        <end position="19"/>
    </location>
</feature>
<feature type="chain" id="PRO_0000008017" description="Endo-1,4-beta-xylanase A">
    <location>
        <begin position="20"/>
        <end position="625"/>
    </location>
</feature>
<feature type="domain" description="GH11 1" evidence="3">
    <location>
        <begin position="35"/>
        <end position="231"/>
    </location>
</feature>
<feature type="repeat" description="1">
    <location>
        <begin position="259"/>
        <end position="268"/>
    </location>
</feature>
<feature type="repeat" description="2">
    <location>
        <begin position="269"/>
        <end position="278"/>
    </location>
</feature>
<feature type="domain" description="CBM10 1" evidence="4">
    <location>
        <begin position="285"/>
        <end position="324"/>
    </location>
</feature>
<feature type="domain" description="CBM10 2" evidence="4">
    <location>
        <begin position="332"/>
        <end position="371"/>
    </location>
</feature>
<feature type="domain" description="GH11 2" evidence="3">
    <location>
        <begin position="416"/>
        <end position="617"/>
    </location>
</feature>
<feature type="region of interest" description="Disordered" evidence="6">
    <location>
        <begin position="245"/>
        <end position="283"/>
    </location>
</feature>
<feature type="region of interest" description="Linker">
    <location>
        <begin position="255"/>
        <end position="279"/>
    </location>
</feature>
<feature type="region of interest" description="2 X 10 AA tandem repeats of G-Q-G-[LQ]-G-N-G-Q-G-[NQ]">
    <location>
        <begin position="259"/>
        <end position="278"/>
    </location>
</feature>
<feature type="region of interest" description="Linker">
    <location>
        <begin position="374"/>
        <end position="403"/>
    </location>
</feature>
<feature type="region of interest" description="Disordered" evidence="6">
    <location>
        <begin position="379"/>
        <end position="399"/>
    </location>
</feature>
<feature type="compositionally biased region" description="Gly residues" evidence="6">
    <location>
        <begin position="252"/>
        <end position="276"/>
    </location>
</feature>
<feature type="active site" description="Nucleophile" evidence="5">
    <location>
        <position position="510"/>
    </location>
</feature>
<feature type="active site" description="Proton donor" evidence="1">
    <location>
        <position position="603"/>
    </location>
</feature>
<reference key="1">
    <citation type="journal article" date="1995" name="J. Biol. Chem.">
        <title>The conserved noncatalytic 40-residue sequence in cellulases and hemicellulases from anaerobic fungi functions as a protein docking domain.</title>
        <authorList>
            <person name="Fanutti C."/>
            <person name="Ponyi T."/>
            <person name="Black G.W."/>
            <person name="Hazlewood G.P."/>
            <person name="Gilbert H.J."/>
        </authorList>
    </citation>
    <scope>NUCLEOTIDE SEQUENCE [MRNA]</scope>
</reference>
<gene>
    <name type="primary">XYNA</name>
</gene>
<protein>
    <recommendedName>
        <fullName>Endo-1,4-beta-xylanase A</fullName>
        <ecNumber>3.2.1.8</ecNumber>
    </recommendedName>
    <alternativeName>
        <fullName>1,4-beta-D-xylan xylanohydrolase</fullName>
    </alternativeName>
    <alternativeName>
        <fullName>Xylanase A</fullName>
        <shortName>XYLA</shortName>
    </alternativeName>
</protein>
<accession>Q12667</accession>
<name>XYNA_PIRSP</name>
<keyword id="KW-0119">Carbohydrate metabolism</keyword>
<keyword id="KW-0326">Glycosidase</keyword>
<keyword id="KW-0378">Hydrolase</keyword>
<keyword id="KW-0624">Polysaccharide degradation</keyword>
<keyword id="KW-0677">Repeat</keyword>
<keyword id="KW-0732">Signal</keyword>
<keyword id="KW-0858">Xylan degradation</keyword>